<feature type="chain" id="PRO_0000325435" description="Anthranilate phosphoribosyltransferase">
    <location>
        <begin position="1"/>
        <end position="341"/>
    </location>
</feature>
<feature type="binding site" evidence="1">
    <location>
        <position position="84"/>
    </location>
    <ligand>
        <name>5-phospho-alpha-D-ribose 1-diphosphate</name>
        <dbReference type="ChEBI" id="CHEBI:58017"/>
    </ligand>
</feature>
<feature type="binding site" evidence="1">
    <location>
        <position position="84"/>
    </location>
    <ligand>
        <name>anthranilate</name>
        <dbReference type="ChEBI" id="CHEBI:16567"/>
        <label>1</label>
    </ligand>
</feature>
<feature type="binding site" evidence="1">
    <location>
        <begin position="94"/>
        <end position="97"/>
    </location>
    <ligand>
        <name>5-phospho-alpha-D-ribose 1-diphosphate</name>
        <dbReference type="ChEBI" id="CHEBI:58017"/>
    </ligand>
</feature>
<feature type="binding site" evidence="1">
    <location>
        <position position="96"/>
    </location>
    <ligand>
        <name>Mg(2+)</name>
        <dbReference type="ChEBI" id="CHEBI:18420"/>
        <label>1</label>
    </ligand>
</feature>
<feature type="binding site" evidence="1">
    <location>
        <begin position="112"/>
        <end position="120"/>
    </location>
    <ligand>
        <name>5-phospho-alpha-D-ribose 1-diphosphate</name>
        <dbReference type="ChEBI" id="CHEBI:58017"/>
    </ligand>
</feature>
<feature type="binding site" evidence="1">
    <location>
        <position position="124"/>
    </location>
    <ligand>
        <name>5-phospho-alpha-D-ribose 1-diphosphate</name>
        <dbReference type="ChEBI" id="CHEBI:58017"/>
    </ligand>
</feature>
<feature type="binding site" evidence="1">
    <location>
        <position position="170"/>
    </location>
    <ligand>
        <name>anthranilate</name>
        <dbReference type="ChEBI" id="CHEBI:16567"/>
        <label>2</label>
    </ligand>
</feature>
<feature type="binding site" evidence="1">
    <location>
        <position position="229"/>
    </location>
    <ligand>
        <name>Mg(2+)</name>
        <dbReference type="ChEBI" id="CHEBI:18420"/>
        <label>2</label>
    </ligand>
</feature>
<feature type="binding site" evidence="1">
    <location>
        <position position="230"/>
    </location>
    <ligand>
        <name>Mg(2+)</name>
        <dbReference type="ChEBI" id="CHEBI:18420"/>
        <label>1</label>
    </ligand>
</feature>
<feature type="binding site" evidence="1">
    <location>
        <position position="230"/>
    </location>
    <ligand>
        <name>Mg(2+)</name>
        <dbReference type="ChEBI" id="CHEBI:18420"/>
        <label>2</label>
    </ligand>
</feature>
<name>TRPD_METFK</name>
<keyword id="KW-0028">Amino-acid biosynthesis</keyword>
<keyword id="KW-0057">Aromatic amino acid biosynthesis</keyword>
<keyword id="KW-0328">Glycosyltransferase</keyword>
<keyword id="KW-0460">Magnesium</keyword>
<keyword id="KW-0479">Metal-binding</keyword>
<keyword id="KW-1185">Reference proteome</keyword>
<keyword id="KW-0808">Transferase</keyword>
<keyword id="KW-0822">Tryptophan biosynthesis</keyword>
<accession>Q1GYF5</accession>
<reference key="1">
    <citation type="submission" date="2006-03" db="EMBL/GenBank/DDBJ databases">
        <title>Complete sequence of Methylobacillus flagellatus KT.</title>
        <authorList>
            <consortium name="US DOE Joint Genome Institute"/>
            <person name="Copeland A."/>
            <person name="Lucas S."/>
            <person name="Lapidus A."/>
            <person name="Barry K."/>
            <person name="Detter J.C."/>
            <person name="Glavina del Rio T."/>
            <person name="Hammon N."/>
            <person name="Israni S."/>
            <person name="Dalin E."/>
            <person name="Tice H."/>
            <person name="Pitluck S."/>
            <person name="Brettin T."/>
            <person name="Bruce D."/>
            <person name="Han C."/>
            <person name="Tapia R."/>
            <person name="Saunders E."/>
            <person name="Gilna P."/>
            <person name="Schmutz J."/>
            <person name="Larimer F."/>
            <person name="Land M."/>
            <person name="Kyrpides N."/>
            <person name="Anderson I."/>
            <person name="Richardson P."/>
        </authorList>
    </citation>
    <scope>NUCLEOTIDE SEQUENCE [LARGE SCALE GENOMIC DNA]</scope>
    <source>
        <strain>ATCC 51484 / DSM 6875 / VKM B-1610 / KT</strain>
    </source>
</reference>
<gene>
    <name evidence="1" type="primary">trpD</name>
    <name type="ordered locus">Mfla_2467</name>
</gene>
<comment type="function">
    <text evidence="1">Catalyzes the transfer of the phosphoribosyl group of 5-phosphorylribose-1-pyrophosphate (PRPP) to anthranilate to yield N-(5'-phosphoribosyl)-anthranilate (PRA).</text>
</comment>
<comment type="catalytic activity">
    <reaction evidence="1">
        <text>N-(5-phospho-beta-D-ribosyl)anthranilate + diphosphate = 5-phospho-alpha-D-ribose 1-diphosphate + anthranilate</text>
        <dbReference type="Rhea" id="RHEA:11768"/>
        <dbReference type="ChEBI" id="CHEBI:16567"/>
        <dbReference type="ChEBI" id="CHEBI:18277"/>
        <dbReference type="ChEBI" id="CHEBI:33019"/>
        <dbReference type="ChEBI" id="CHEBI:58017"/>
        <dbReference type="EC" id="2.4.2.18"/>
    </reaction>
</comment>
<comment type="cofactor">
    <cofactor evidence="1">
        <name>Mg(2+)</name>
        <dbReference type="ChEBI" id="CHEBI:18420"/>
    </cofactor>
    <text evidence="1">Binds 2 magnesium ions per monomer.</text>
</comment>
<comment type="pathway">
    <text evidence="1">Amino-acid biosynthesis; L-tryptophan biosynthesis; L-tryptophan from chorismate: step 2/5.</text>
</comment>
<comment type="subunit">
    <text evidence="1">Homodimer.</text>
</comment>
<comment type="similarity">
    <text evidence="1">Belongs to the anthranilate phosphoribosyltransferase family.</text>
</comment>
<evidence type="ECO:0000255" key="1">
    <source>
        <dbReference type="HAMAP-Rule" id="MF_00211"/>
    </source>
</evidence>
<sequence length="341" mass="35757">MSMTPKLALQRLIDHTDFTHEEMLDVMQQIMGGAFTTVQIAGFLAGLRVKGETVTEIAAAAQVMRALSSKVEVEDSSYLVDTCGTGGAPTKAFNVSTASAFVAAGAGARIAKHGGRAASSKSGSADVLEALGVNIGLTPEQVARCVNEAGIGFMFAPNHHAAMKYAAPVRRELGVRTMFNLLGPMTNPAGAKRQVMGVFDRDLVSLLAHTLKKLGSEHVMVVHSADGMDEISFSADTYVAELKHGEVNEYTLNPAQFDMPLHEIDSIHVENAQQSSEIILGVLSGARGPARDIVLLNAGAAIYVSGIAGDLQDGIAQAAHSLDSGAALHKLQQLKALSQAA</sequence>
<proteinExistence type="inferred from homology"/>
<protein>
    <recommendedName>
        <fullName evidence="1">Anthranilate phosphoribosyltransferase</fullName>
        <ecNumber evidence="1">2.4.2.18</ecNumber>
    </recommendedName>
</protein>
<dbReference type="EC" id="2.4.2.18" evidence="1"/>
<dbReference type="EMBL" id="CP000284">
    <property type="protein sequence ID" value="ABE50732.1"/>
    <property type="molecule type" value="Genomic_DNA"/>
</dbReference>
<dbReference type="RefSeq" id="WP_011480685.1">
    <property type="nucleotide sequence ID" value="NC_007947.1"/>
</dbReference>
<dbReference type="SMR" id="Q1GYF5"/>
<dbReference type="STRING" id="265072.Mfla_2467"/>
<dbReference type="KEGG" id="mfa:Mfla_2467"/>
<dbReference type="eggNOG" id="COG0547">
    <property type="taxonomic scope" value="Bacteria"/>
</dbReference>
<dbReference type="HOGENOM" id="CLU_034315_2_1_4"/>
<dbReference type="UniPathway" id="UPA00035">
    <property type="reaction ID" value="UER00041"/>
</dbReference>
<dbReference type="Proteomes" id="UP000002440">
    <property type="component" value="Chromosome"/>
</dbReference>
<dbReference type="GO" id="GO:0005829">
    <property type="term" value="C:cytosol"/>
    <property type="evidence" value="ECO:0007669"/>
    <property type="project" value="TreeGrafter"/>
</dbReference>
<dbReference type="GO" id="GO:0004048">
    <property type="term" value="F:anthranilate phosphoribosyltransferase activity"/>
    <property type="evidence" value="ECO:0007669"/>
    <property type="project" value="UniProtKB-UniRule"/>
</dbReference>
<dbReference type="GO" id="GO:0000287">
    <property type="term" value="F:magnesium ion binding"/>
    <property type="evidence" value="ECO:0007669"/>
    <property type="project" value="UniProtKB-UniRule"/>
</dbReference>
<dbReference type="GO" id="GO:0000162">
    <property type="term" value="P:L-tryptophan biosynthetic process"/>
    <property type="evidence" value="ECO:0007669"/>
    <property type="project" value="UniProtKB-UniRule"/>
</dbReference>
<dbReference type="FunFam" id="3.40.1030.10:FF:000002">
    <property type="entry name" value="Anthranilate phosphoribosyltransferase"/>
    <property type="match status" value="1"/>
</dbReference>
<dbReference type="Gene3D" id="3.40.1030.10">
    <property type="entry name" value="Nucleoside phosphorylase/phosphoribosyltransferase catalytic domain"/>
    <property type="match status" value="1"/>
</dbReference>
<dbReference type="Gene3D" id="1.20.970.10">
    <property type="entry name" value="Transferase, Pyrimidine Nucleoside Phosphorylase, Chain C"/>
    <property type="match status" value="1"/>
</dbReference>
<dbReference type="HAMAP" id="MF_00211">
    <property type="entry name" value="TrpD"/>
    <property type="match status" value="1"/>
</dbReference>
<dbReference type="InterPro" id="IPR005940">
    <property type="entry name" value="Anthranilate_Pribosyl_Tfrase"/>
</dbReference>
<dbReference type="InterPro" id="IPR000312">
    <property type="entry name" value="Glycosyl_Trfase_fam3"/>
</dbReference>
<dbReference type="InterPro" id="IPR017459">
    <property type="entry name" value="Glycosyl_Trfase_fam3_N_dom"/>
</dbReference>
<dbReference type="InterPro" id="IPR036320">
    <property type="entry name" value="Glycosyl_Trfase_fam3_N_dom_sf"/>
</dbReference>
<dbReference type="InterPro" id="IPR035902">
    <property type="entry name" value="Nuc_phospho_transferase"/>
</dbReference>
<dbReference type="NCBIfam" id="TIGR01245">
    <property type="entry name" value="trpD"/>
    <property type="match status" value="1"/>
</dbReference>
<dbReference type="PANTHER" id="PTHR43285">
    <property type="entry name" value="ANTHRANILATE PHOSPHORIBOSYLTRANSFERASE"/>
    <property type="match status" value="1"/>
</dbReference>
<dbReference type="PANTHER" id="PTHR43285:SF2">
    <property type="entry name" value="ANTHRANILATE PHOSPHORIBOSYLTRANSFERASE"/>
    <property type="match status" value="1"/>
</dbReference>
<dbReference type="Pfam" id="PF02885">
    <property type="entry name" value="Glycos_trans_3N"/>
    <property type="match status" value="1"/>
</dbReference>
<dbReference type="Pfam" id="PF00591">
    <property type="entry name" value="Glycos_transf_3"/>
    <property type="match status" value="1"/>
</dbReference>
<dbReference type="SUPFAM" id="SSF52418">
    <property type="entry name" value="Nucleoside phosphorylase/phosphoribosyltransferase catalytic domain"/>
    <property type="match status" value="1"/>
</dbReference>
<dbReference type="SUPFAM" id="SSF47648">
    <property type="entry name" value="Nucleoside phosphorylase/phosphoribosyltransferase N-terminal domain"/>
    <property type="match status" value="1"/>
</dbReference>
<organism>
    <name type="scientific">Methylobacillus flagellatus (strain ATCC 51484 / DSM 6875 / VKM B-1610 / KT)</name>
    <dbReference type="NCBI Taxonomy" id="265072"/>
    <lineage>
        <taxon>Bacteria</taxon>
        <taxon>Pseudomonadati</taxon>
        <taxon>Pseudomonadota</taxon>
        <taxon>Betaproteobacteria</taxon>
        <taxon>Nitrosomonadales</taxon>
        <taxon>Methylophilaceae</taxon>
        <taxon>Methylobacillus</taxon>
    </lineage>
</organism>